<dbReference type="EC" id="2.3.1.16" evidence="1"/>
<dbReference type="EMBL" id="CP001396">
    <property type="protein sequence ID" value="ACR62059.1"/>
    <property type="molecule type" value="Genomic_DNA"/>
</dbReference>
<dbReference type="RefSeq" id="WP_000531952.1">
    <property type="nucleotide sequence ID" value="NC_012759.1"/>
</dbReference>
<dbReference type="SMR" id="C4ZVN3"/>
<dbReference type="KEGG" id="ebw:BWG_2114"/>
<dbReference type="HOGENOM" id="CLU_031026_2_0_6"/>
<dbReference type="UniPathway" id="UPA00659"/>
<dbReference type="GO" id="GO:0005829">
    <property type="term" value="C:cytosol"/>
    <property type="evidence" value="ECO:0007669"/>
    <property type="project" value="TreeGrafter"/>
</dbReference>
<dbReference type="GO" id="GO:0003988">
    <property type="term" value="F:acetyl-CoA C-acyltransferase activity"/>
    <property type="evidence" value="ECO:0007669"/>
    <property type="project" value="UniProtKB-UniRule"/>
</dbReference>
<dbReference type="GO" id="GO:0006635">
    <property type="term" value="P:fatty acid beta-oxidation"/>
    <property type="evidence" value="ECO:0007669"/>
    <property type="project" value="UniProtKB-UniRule"/>
</dbReference>
<dbReference type="CDD" id="cd00751">
    <property type="entry name" value="thiolase"/>
    <property type="match status" value="1"/>
</dbReference>
<dbReference type="FunFam" id="3.40.47.10:FF:000011">
    <property type="entry name" value="3-ketoacyl-CoA thiolase"/>
    <property type="match status" value="1"/>
</dbReference>
<dbReference type="Gene3D" id="3.40.47.10">
    <property type="match status" value="1"/>
</dbReference>
<dbReference type="HAMAP" id="MF_01618">
    <property type="entry name" value="FadI"/>
    <property type="match status" value="1"/>
</dbReference>
<dbReference type="InterPro" id="IPR012806">
    <property type="entry name" value="Ac-CoA_C-AcTrfase_FadI"/>
</dbReference>
<dbReference type="InterPro" id="IPR002155">
    <property type="entry name" value="Thiolase"/>
</dbReference>
<dbReference type="InterPro" id="IPR016039">
    <property type="entry name" value="Thiolase-like"/>
</dbReference>
<dbReference type="InterPro" id="IPR020615">
    <property type="entry name" value="Thiolase_acyl_enz_int_AS"/>
</dbReference>
<dbReference type="InterPro" id="IPR020610">
    <property type="entry name" value="Thiolase_AS"/>
</dbReference>
<dbReference type="InterPro" id="IPR020617">
    <property type="entry name" value="Thiolase_C"/>
</dbReference>
<dbReference type="InterPro" id="IPR020613">
    <property type="entry name" value="Thiolase_CS"/>
</dbReference>
<dbReference type="InterPro" id="IPR020616">
    <property type="entry name" value="Thiolase_N"/>
</dbReference>
<dbReference type="NCBIfam" id="TIGR01930">
    <property type="entry name" value="AcCoA-C-Actrans"/>
    <property type="match status" value="1"/>
</dbReference>
<dbReference type="NCBIfam" id="TIGR02446">
    <property type="entry name" value="FadI"/>
    <property type="match status" value="1"/>
</dbReference>
<dbReference type="NCBIfam" id="NF006516">
    <property type="entry name" value="PRK08963.1"/>
    <property type="match status" value="1"/>
</dbReference>
<dbReference type="PANTHER" id="PTHR18919:SF107">
    <property type="entry name" value="ACETYL-COA ACETYLTRANSFERASE, CYTOSOLIC"/>
    <property type="match status" value="1"/>
</dbReference>
<dbReference type="PANTHER" id="PTHR18919">
    <property type="entry name" value="ACETYL-COA C-ACYLTRANSFERASE"/>
    <property type="match status" value="1"/>
</dbReference>
<dbReference type="Pfam" id="PF02803">
    <property type="entry name" value="Thiolase_C"/>
    <property type="match status" value="1"/>
</dbReference>
<dbReference type="Pfam" id="PF00108">
    <property type="entry name" value="Thiolase_N"/>
    <property type="match status" value="1"/>
</dbReference>
<dbReference type="PIRSF" id="PIRSF000429">
    <property type="entry name" value="Ac-CoA_Ac_transf"/>
    <property type="match status" value="1"/>
</dbReference>
<dbReference type="SUPFAM" id="SSF53901">
    <property type="entry name" value="Thiolase-like"/>
    <property type="match status" value="2"/>
</dbReference>
<dbReference type="PROSITE" id="PS00098">
    <property type="entry name" value="THIOLASE_1"/>
    <property type="match status" value="1"/>
</dbReference>
<dbReference type="PROSITE" id="PS00737">
    <property type="entry name" value="THIOLASE_2"/>
    <property type="match status" value="1"/>
</dbReference>
<dbReference type="PROSITE" id="PS00099">
    <property type="entry name" value="THIOLASE_3"/>
    <property type="match status" value="1"/>
</dbReference>
<name>FADI_ECOBW</name>
<evidence type="ECO:0000255" key="1">
    <source>
        <dbReference type="HAMAP-Rule" id="MF_01618"/>
    </source>
</evidence>
<protein>
    <recommendedName>
        <fullName evidence="1">3-ketoacyl-CoA thiolase</fullName>
        <ecNumber evidence="1">2.3.1.16</ecNumber>
    </recommendedName>
    <alternativeName>
        <fullName evidence="1">ACSs</fullName>
    </alternativeName>
    <alternativeName>
        <fullName evidence="1">Acetyl-CoA acyltransferase</fullName>
    </alternativeName>
    <alternativeName>
        <fullName evidence="1">Acyl-CoA ligase</fullName>
    </alternativeName>
    <alternativeName>
        <fullName evidence="1">Beta-ketothiolase</fullName>
    </alternativeName>
    <alternativeName>
        <fullName evidence="1">Fatty acid oxidation complex subunit beta</fullName>
    </alternativeName>
</protein>
<feature type="chain" id="PRO_1000215732" description="3-ketoacyl-CoA thiolase">
    <location>
        <begin position="1"/>
        <end position="436"/>
    </location>
</feature>
<feature type="active site" description="Acyl-thioester intermediate" evidence="1">
    <location>
        <position position="99"/>
    </location>
</feature>
<feature type="active site" description="Proton acceptor" evidence="1">
    <location>
        <position position="392"/>
    </location>
</feature>
<feature type="active site" description="Proton acceptor" evidence="1">
    <location>
        <position position="422"/>
    </location>
</feature>
<comment type="function">
    <text evidence="1">Catalyzes the final step of fatty acid oxidation in which acetyl-CoA is released and the CoA ester of a fatty acid two carbons shorter is formed.</text>
</comment>
<comment type="catalytic activity">
    <reaction evidence="1">
        <text>an acyl-CoA + acetyl-CoA = a 3-oxoacyl-CoA + CoA</text>
        <dbReference type="Rhea" id="RHEA:21564"/>
        <dbReference type="ChEBI" id="CHEBI:57287"/>
        <dbReference type="ChEBI" id="CHEBI:57288"/>
        <dbReference type="ChEBI" id="CHEBI:58342"/>
        <dbReference type="ChEBI" id="CHEBI:90726"/>
        <dbReference type="EC" id="2.3.1.16"/>
    </reaction>
</comment>
<comment type="pathway">
    <text evidence="1">Lipid metabolism; fatty acid beta-oxidation.</text>
</comment>
<comment type="subunit">
    <text evidence="1">Heterotetramer of two alpha chains (FadJ) and two beta chains (FadI).</text>
</comment>
<comment type="subcellular location">
    <subcellularLocation>
        <location evidence="1">Cytoplasm</location>
    </subcellularLocation>
</comment>
<comment type="similarity">
    <text evidence="1">Belongs to the thiolase-like superfamily. Thiolase family.</text>
</comment>
<accession>C4ZVN3</accession>
<proteinExistence type="inferred from homology"/>
<sequence>MGQVLPLVTRQGDRIAIVSGLRTPFARQATAFHGIPAVDLGKMVVGELLARSEIPAEVIEQLVFGQVVQMPEAPNIAREIVLGTGMNVHTDAYSVSRACATSFQAVANVAESLMAGTIRAGIAGGADSSSVLPIGVSKKLARVLVDVNKARTMSQRLKLFSRLRLRDLMPVPPAVAEYSTGLRMGDTAEQMAKTYGITREQQDALAHRSHQRAAQAWSDGKLKEEVMTAFIPPYKQPLVEDNNIRGNSSLADYAKLRPAFDRKHGTVTAANSTPLTDGAAAVILMTESRAKELGLVPLGYLRSYAFTAIDVWQDMLLGPAWSTPLALERAGLTMSDLTLIDMHEAFAAQTLANIQLLGSERFAREALGRAHATGEVDDSKFNVLGGSIAYGHPFAATGARMITQTLHELRRRGGGFGLVTACAAGGLGAAMVLEAE</sequence>
<organism>
    <name type="scientific">Escherichia coli (strain K12 / MC4100 / BW2952)</name>
    <dbReference type="NCBI Taxonomy" id="595496"/>
    <lineage>
        <taxon>Bacteria</taxon>
        <taxon>Pseudomonadati</taxon>
        <taxon>Pseudomonadota</taxon>
        <taxon>Gammaproteobacteria</taxon>
        <taxon>Enterobacterales</taxon>
        <taxon>Enterobacteriaceae</taxon>
        <taxon>Escherichia</taxon>
    </lineage>
</organism>
<keyword id="KW-0012">Acyltransferase</keyword>
<keyword id="KW-0963">Cytoplasm</keyword>
<keyword id="KW-0276">Fatty acid metabolism</keyword>
<keyword id="KW-0442">Lipid degradation</keyword>
<keyword id="KW-0443">Lipid metabolism</keyword>
<keyword id="KW-0808">Transferase</keyword>
<reference key="1">
    <citation type="journal article" date="2009" name="J. Bacteriol.">
        <title>Genomic sequencing reveals regulatory mutations and recombinational events in the widely used MC4100 lineage of Escherichia coli K-12.</title>
        <authorList>
            <person name="Ferenci T."/>
            <person name="Zhou Z."/>
            <person name="Betteridge T."/>
            <person name="Ren Y."/>
            <person name="Liu Y."/>
            <person name="Feng L."/>
            <person name="Reeves P.R."/>
            <person name="Wang L."/>
        </authorList>
    </citation>
    <scope>NUCLEOTIDE SEQUENCE [LARGE SCALE GENOMIC DNA]</scope>
    <source>
        <strain>K12 / MC4100 / BW2952</strain>
    </source>
</reference>
<gene>
    <name evidence="1" type="primary">fadI</name>
    <name type="ordered locus">BWG_2114</name>
</gene>